<feature type="chain" id="PRO_1000043012" description="Anthranilate phosphoribosyltransferase">
    <location>
        <begin position="1"/>
        <end position="346"/>
    </location>
</feature>
<feature type="binding site" evidence="1">
    <location>
        <position position="81"/>
    </location>
    <ligand>
        <name>5-phospho-alpha-D-ribose 1-diphosphate</name>
        <dbReference type="ChEBI" id="CHEBI:58017"/>
    </ligand>
</feature>
<feature type="binding site" evidence="1">
    <location>
        <position position="81"/>
    </location>
    <ligand>
        <name>anthranilate</name>
        <dbReference type="ChEBI" id="CHEBI:16567"/>
        <label>1</label>
    </ligand>
</feature>
<feature type="binding site" evidence="1">
    <location>
        <begin position="84"/>
        <end position="85"/>
    </location>
    <ligand>
        <name>5-phospho-alpha-D-ribose 1-diphosphate</name>
        <dbReference type="ChEBI" id="CHEBI:58017"/>
    </ligand>
</feature>
<feature type="binding site" evidence="1">
    <location>
        <begin position="91"/>
        <end position="94"/>
    </location>
    <ligand>
        <name>5-phospho-alpha-D-ribose 1-diphosphate</name>
        <dbReference type="ChEBI" id="CHEBI:58017"/>
    </ligand>
</feature>
<feature type="binding site" evidence="1">
    <location>
        <position position="93"/>
    </location>
    <ligand>
        <name>Mg(2+)</name>
        <dbReference type="ChEBI" id="CHEBI:18420"/>
        <label>1</label>
    </ligand>
</feature>
<feature type="binding site" evidence="1">
    <location>
        <begin position="109"/>
        <end position="117"/>
    </location>
    <ligand>
        <name>5-phospho-alpha-D-ribose 1-diphosphate</name>
        <dbReference type="ChEBI" id="CHEBI:58017"/>
    </ligand>
</feature>
<feature type="binding site" evidence="1">
    <location>
        <position position="112"/>
    </location>
    <ligand>
        <name>anthranilate</name>
        <dbReference type="ChEBI" id="CHEBI:16567"/>
        <label>1</label>
    </ligand>
</feature>
<feature type="binding site" evidence="1">
    <location>
        <position position="121"/>
    </location>
    <ligand>
        <name>5-phospho-alpha-D-ribose 1-diphosphate</name>
        <dbReference type="ChEBI" id="CHEBI:58017"/>
    </ligand>
</feature>
<feature type="binding site" evidence="1">
    <location>
        <position position="167"/>
    </location>
    <ligand>
        <name>anthranilate</name>
        <dbReference type="ChEBI" id="CHEBI:16567"/>
        <label>2</label>
    </ligand>
</feature>
<feature type="binding site" evidence="1">
    <location>
        <position position="226"/>
    </location>
    <ligand>
        <name>Mg(2+)</name>
        <dbReference type="ChEBI" id="CHEBI:18420"/>
        <label>2</label>
    </ligand>
</feature>
<feature type="binding site" evidence="1">
    <location>
        <position position="227"/>
    </location>
    <ligand>
        <name>Mg(2+)</name>
        <dbReference type="ChEBI" id="CHEBI:18420"/>
        <label>1</label>
    </ligand>
</feature>
<feature type="binding site" evidence="1">
    <location>
        <position position="227"/>
    </location>
    <ligand>
        <name>Mg(2+)</name>
        <dbReference type="ChEBI" id="CHEBI:18420"/>
        <label>2</label>
    </ligand>
</feature>
<dbReference type="EC" id="2.4.2.18" evidence="1"/>
<dbReference type="EMBL" id="CP000155">
    <property type="protein sequence ID" value="ABC32775.1"/>
    <property type="molecule type" value="Genomic_DNA"/>
</dbReference>
<dbReference type="RefSeq" id="WP_011399833.1">
    <property type="nucleotide sequence ID" value="NC_007645.1"/>
</dbReference>
<dbReference type="SMR" id="Q2S999"/>
<dbReference type="STRING" id="349521.HCH_06127"/>
<dbReference type="KEGG" id="hch:HCH_06127"/>
<dbReference type="eggNOG" id="COG0547">
    <property type="taxonomic scope" value="Bacteria"/>
</dbReference>
<dbReference type="HOGENOM" id="CLU_034315_2_1_6"/>
<dbReference type="OrthoDB" id="9806430at2"/>
<dbReference type="UniPathway" id="UPA00035">
    <property type="reaction ID" value="UER00041"/>
</dbReference>
<dbReference type="Proteomes" id="UP000000238">
    <property type="component" value="Chromosome"/>
</dbReference>
<dbReference type="GO" id="GO:0005829">
    <property type="term" value="C:cytosol"/>
    <property type="evidence" value="ECO:0007669"/>
    <property type="project" value="TreeGrafter"/>
</dbReference>
<dbReference type="GO" id="GO:0004048">
    <property type="term" value="F:anthranilate phosphoribosyltransferase activity"/>
    <property type="evidence" value="ECO:0007669"/>
    <property type="project" value="UniProtKB-UniRule"/>
</dbReference>
<dbReference type="GO" id="GO:0000287">
    <property type="term" value="F:magnesium ion binding"/>
    <property type="evidence" value="ECO:0007669"/>
    <property type="project" value="UniProtKB-UniRule"/>
</dbReference>
<dbReference type="GO" id="GO:0000162">
    <property type="term" value="P:L-tryptophan biosynthetic process"/>
    <property type="evidence" value="ECO:0007669"/>
    <property type="project" value="UniProtKB-UniRule"/>
</dbReference>
<dbReference type="FunFam" id="1.20.970.10:FF:000006">
    <property type="entry name" value="Anthranilate phosphoribosyltransferase"/>
    <property type="match status" value="1"/>
</dbReference>
<dbReference type="FunFam" id="3.40.1030.10:FF:000002">
    <property type="entry name" value="Anthranilate phosphoribosyltransferase"/>
    <property type="match status" value="1"/>
</dbReference>
<dbReference type="Gene3D" id="3.40.1030.10">
    <property type="entry name" value="Nucleoside phosphorylase/phosphoribosyltransferase catalytic domain"/>
    <property type="match status" value="1"/>
</dbReference>
<dbReference type="Gene3D" id="1.20.970.10">
    <property type="entry name" value="Transferase, Pyrimidine Nucleoside Phosphorylase, Chain C"/>
    <property type="match status" value="1"/>
</dbReference>
<dbReference type="HAMAP" id="MF_00211">
    <property type="entry name" value="TrpD"/>
    <property type="match status" value="1"/>
</dbReference>
<dbReference type="InterPro" id="IPR005940">
    <property type="entry name" value="Anthranilate_Pribosyl_Tfrase"/>
</dbReference>
<dbReference type="InterPro" id="IPR000312">
    <property type="entry name" value="Glycosyl_Trfase_fam3"/>
</dbReference>
<dbReference type="InterPro" id="IPR017459">
    <property type="entry name" value="Glycosyl_Trfase_fam3_N_dom"/>
</dbReference>
<dbReference type="InterPro" id="IPR036320">
    <property type="entry name" value="Glycosyl_Trfase_fam3_N_dom_sf"/>
</dbReference>
<dbReference type="InterPro" id="IPR035902">
    <property type="entry name" value="Nuc_phospho_transferase"/>
</dbReference>
<dbReference type="NCBIfam" id="TIGR01245">
    <property type="entry name" value="trpD"/>
    <property type="match status" value="1"/>
</dbReference>
<dbReference type="PANTHER" id="PTHR43285">
    <property type="entry name" value="ANTHRANILATE PHOSPHORIBOSYLTRANSFERASE"/>
    <property type="match status" value="1"/>
</dbReference>
<dbReference type="PANTHER" id="PTHR43285:SF2">
    <property type="entry name" value="ANTHRANILATE PHOSPHORIBOSYLTRANSFERASE"/>
    <property type="match status" value="1"/>
</dbReference>
<dbReference type="Pfam" id="PF02885">
    <property type="entry name" value="Glycos_trans_3N"/>
    <property type="match status" value="1"/>
</dbReference>
<dbReference type="Pfam" id="PF00591">
    <property type="entry name" value="Glycos_transf_3"/>
    <property type="match status" value="1"/>
</dbReference>
<dbReference type="SUPFAM" id="SSF52418">
    <property type="entry name" value="Nucleoside phosphorylase/phosphoribosyltransferase catalytic domain"/>
    <property type="match status" value="1"/>
</dbReference>
<dbReference type="SUPFAM" id="SSF47648">
    <property type="entry name" value="Nucleoside phosphorylase/phosphoribosyltransferase N-terminal domain"/>
    <property type="match status" value="1"/>
</dbReference>
<gene>
    <name evidence="1" type="primary">trpD</name>
    <name type="ordered locus">HCH_06127</name>
</gene>
<protein>
    <recommendedName>
        <fullName evidence="1">Anthranilate phosphoribosyltransferase</fullName>
        <ecNumber evidence="1">2.4.2.18</ecNumber>
    </recommendedName>
</protein>
<evidence type="ECO:0000255" key="1">
    <source>
        <dbReference type="HAMAP-Rule" id="MF_00211"/>
    </source>
</evidence>
<keyword id="KW-0028">Amino-acid biosynthesis</keyword>
<keyword id="KW-0057">Aromatic amino acid biosynthesis</keyword>
<keyword id="KW-0328">Glycosyltransferase</keyword>
<keyword id="KW-0460">Magnesium</keyword>
<keyword id="KW-0479">Metal-binding</keyword>
<keyword id="KW-1185">Reference proteome</keyword>
<keyword id="KW-0808">Transferase</keyword>
<keyword id="KW-0822">Tryptophan biosynthesis</keyword>
<name>TRPD_HAHCH</name>
<organism>
    <name type="scientific">Hahella chejuensis (strain KCTC 2396)</name>
    <dbReference type="NCBI Taxonomy" id="349521"/>
    <lineage>
        <taxon>Bacteria</taxon>
        <taxon>Pseudomonadati</taxon>
        <taxon>Pseudomonadota</taxon>
        <taxon>Gammaproteobacteria</taxon>
        <taxon>Oceanospirillales</taxon>
        <taxon>Hahellaceae</taxon>
        <taxon>Hahella</taxon>
    </lineage>
</organism>
<reference key="1">
    <citation type="journal article" date="2005" name="Nucleic Acids Res.">
        <title>Genomic blueprint of Hahella chejuensis, a marine microbe producing an algicidal agent.</title>
        <authorList>
            <person name="Jeong H."/>
            <person name="Yim J.H."/>
            <person name="Lee C."/>
            <person name="Choi S.-H."/>
            <person name="Park Y.K."/>
            <person name="Yoon S.H."/>
            <person name="Hur C.-G."/>
            <person name="Kang H.-Y."/>
            <person name="Kim D."/>
            <person name="Lee H.H."/>
            <person name="Park K.H."/>
            <person name="Park S.-H."/>
            <person name="Park H.-S."/>
            <person name="Lee H.K."/>
            <person name="Oh T.K."/>
            <person name="Kim J.F."/>
        </authorList>
    </citation>
    <scope>NUCLEOTIDE SEQUENCE [LARGE SCALE GENOMIC DNA]</scope>
    <source>
        <strain>KCTC 2396</strain>
    </source>
</reference>
<proteinExistence type="inferred from homology"/>
<sequence>MDIKAAIAKVVDRKDLTTEEMIEVMQQIMTGQATPAQIGGFLVALRFKSESVGEITGAAQVMRQLASKVDIDDPHLVDTCGTGGDGSNLFNVSTAAAFVVAAAGGKVAKHGNRSVSSRSGSADVLEAAGINLDMTAEQVARAIKEIGVGFLFAPAHHSAMKHAIGPRREMGIRTIFNMLGPLTNPAGVTKQVIGVFNPLLCLPLAEVLQRLGSTHVLVVSAADGLDEISLACETHVAELKDGKISEYTLTPEDAGIMRRSLDGLTVASAEESLTLIEAALTKVTDQTSQKARDIVALNAGAAIYAADLASSFKEGVEMAQDAIGSGLAFAKLKELASFSACFKEEE</sequence>
<accession>Q2S999</accession>
<comment type="function">
    <text evidence="1">Catalyzes the transfer of the phosphoribosyl group of 5-phosphorylribose-1-pyrophosphate (PRPP) to anthranilate to yield N-(5'-phosphoribosyl)-anthranilate (PRA).</text>
</comment>
<comment type="catalytic activity">
    <reaction evidence="1">
        <text>N-(5-phospho-beta-D-ribosyl)anthranilate + diphosphate = 5-phospho-alpha-D-ribose 1-diphosphate + anthranilate</text>
        <dbReference type="Rhea" id="RHEA:11768"/>
        <dbReference type="ChEBI" id="CHEBI:16567"/>
        <dbReference type="ChEBI" id="CHEBI:18277"/>
        <dbReference type="ChEBI" id="CHEBI:33019"/>
        <dbReference type="ChEBI" id="CHEBI:58017"/>
        <dbReference type="EC" id="2.4.2.18"/>
    </reaction>
</comment>
<comment type="cofactor">
    <cofactor evidence="1">
        <name>Mg(2+)</name>
        <dbReference type="ChEBI" id="CHEBI:18420"/>
    </cofactor>
    <text evidence="1">Binds 2 magnesium ions per monomer.</text>
</comment>
<comment type="pathway">
    <text evidence="1">Amino-acid biosynthesis; L-tryptophan biosynthesis; L-tryptophan from chorismate: step 2/5.</text>
</comment>
<comment type="subunit">
    <text evidence="1">Homodimer.</text>
</comment>
<comment type="similarity">
    <text evidence="1">Belongs to the anthranilate phosphoribosyltransferase family.</text>
</comment>